<proteinExistence type="evidence at protein level"/>
<evidence type="ECO:0000250" key="1">
    <source>
        <dbReference type="UniProtKB" id="B5DFF2"/>
    </source>
</evidence>
<evidence type="ECO:0000250" key="2">
    <source>
        <dbReference type="UniProtKB" id="Q6ZRY4"/>
    </source>
</evidence>
<evidence type="ECO:0000250" key="3">
    <source>
        <dbReference type="UniProtKB" id="Q9W6I1"/>
    </source>
</evidence>
<evidence type="ECO:0000255" key="4">
    <source>
        <dbReference type="PROSITE-ProRule" id="PRU00176"/>
    </source>
</evidence>
<evidence type="ECO:0007744" key="5">
    <source>
    </source>
</evidence>
<sequence>MSNLKPDVEHCTGAGTGSPLEEEVRTLFVSGLPVDIKPRELYLLFRPFKGYEGSLIKLTSRQPVGFVIFDSRAGAEAAKNALNGIRFDPENPQTLRLEFAKANTKMAKSKLIATPNPTSVHPALGAHLIARDPYDLMGTALIPASPEAWAPYPLYTTELTPAISHTTFTYPAATAAAAAAATLHAQVRWYPSSDTTQQGWKYRQFC</sequence>
<name>RBPS2_MOUSE</name>
<protein>
    <recommendedName>
        <fullName>RNA-binding protein with multiple splicing 2</fullName>
    </recommendedName>
</protein>
<comment type="function">
    <text evidence="1 2 3">RNA-binding protein involved in the regulation of smooth muscle cell differentiation and proliferation in the gastrointestinal system (By similarity). Binds NOG mRNA, the major inhibitor of the bone morphogenetic protein (BMP) pathway. Mediates an increase of NOG mRNA levels, thereby contributing to the negative regulation of BMP signaling pathway and promoting reversible dedifferentiation and proliferation of smooth muscle cells (By similarity). Acts as a pre-mRNA alternative splicing regulator. Mediates ACTN1 and FLNB alternative splicing (By similarity). Likely binds to mRNA tandem CAC trinucleotide or CA dinucleotide motifs (By similarity).</text>
</comment>
<comment type="subunit">
    <text evidence="2">Homodimer. Interacts with EEF2.</text>
</comment>
<comment type="subcellular location">
    <subcellularLocation>
        <location evidence="2">Cytoplasm</location>
    </subcellularLocation>
    <subcellularLocation>
        <location evidence="2">Nucleus</location>
    </subcellularLocation>
    <subcellularLocation>
        <location evidence="2">Cytoplasm</location>
        <location evidence="2">Stress granule</location>
    </subcellularLocation>
</comment>
<comment type="domain">
    <text evidence="2">The RNA recognition motif (RRM) domain mediates binding to tandem CAC trinucleotide motif separated by a variable spacer region present on single-stranded RNA. Can also bind to CA dinucleotide repeats.</text>
</comment>
<feature type="initiator methionine" description="Removed" evidence="5">
    <location>
        <position position="1"/>
    </location>
</feature>
<feature type="chain" id="PRO_0000274910" description="RNA-binding protein with multiple splicing 2">
    <location>
        <begin position="2"/>
        <end position="206"/>
    </location>
</feature>
<feature type="domain" description="RRM" evidence="4">
    <location>
        <begin position="25"/>
        <end position="102"/>
    </location>
</feature>
<feature type="region of interest" description="Important for homodimerization" evidence="2">
    <location>
        <begin position="35"/>
        <end position="45"/>
    </location>
</feature>
<feature type="modified residue" description="N-acetylserine" evidence="5">
    <location>
        <position position="2"/>
    </location>
</feature>
<gene>
    <name type="primary">Rbpms2</name>
</gene>
<dbReference type="EMBL" id="AK144659">
    <property type="protein sequence ID" value="BAE25995.1"/>
    <property type="molecule type" value="mRNA"/>
</dbReference>
<dbReference type="EMBL" id="AK156633">
    <property type="protein sequence ID" value="BAE33785.1"/>
    <property type="molecule type" value="mRNA"/>
</dbReference>
<dbReference type="EMBL" id="BC021788">
    <property type="protein sequence ID" value="AAH21788.1"/>
    <property type="molecule type" value="mRNA"/>
</dbReference>
<dbReference type="CCDS" id="CCDS23296.1"/>
<dbReference type="RefSeq" id="NP_082306.2">
    <property type="nucleotide sequence ID" value="NM_028030.3"/>
</dbReference>
<dbReference type="RefSeq" id="XP_006511518.1">
    <property type="nucleotide sequence ID" value="XM_006511455.2"/>
</dbReference>
<dbReference type="RefSeq" id="XP_006511519.1">
    <property type="nucleotide sequence ID" value="XM_006511456.4"/>
</dbReference>
<dbReference type="RefSeq" id="XP_006511520.1">
    <property type="nucleotide sequence ID" value="XM_006511457.3"/>
</dbReference>
<dbReference type="RefSeq" id="XP_006511521.1">
    <property type="nucleotide sequence ID" value="XM_006511458.4"/>
</dbReference>
<dbReference type="BMRB" id="Q8VC52"/>
<dbReference type="SMR" id="Q8VC52"/>
<dbReference type="FunCoup" id="Q8VC52">
    <property type="interactions" value="748"/>
</dbReference>
<dbReference type="STRING" id="10090.ENSMUSP00000057600"/>
<dbReference type="iPTMnet" id="Q8VC52"/>
<dbReference type="PhosphoSitePlus" id="Q8VC52"/>
<dbReference type="jPOST" id="Q8VC52"/>
<dbReference type="PaxDb" id="10090-ENSMUSP00000057600"/>
<dbReference type="PeptideAtlas" id="Q8VC52"/>
<dbReference type="ProteomicsDB" id="254900"/>
<dbReference type="Antibodypedia" id="25848">
    <property type="antibodies" value="87 antibodies from 17 providers"/>
</dbReference>
<dbReference type="DNASU" id="71973"/>
<dbReference type="Ensembl" id="ENSMUST00000055844.10">
    <property type="protein sequence ID" value="ENSMUSP00000057600.9"/>
    <property type="gene ID" value="ENSMUSG00000032387.16"/>
</dbReference>
<dbReference type="GeneID" id="71973"/>
<dbReference type="KEGG" id="mmu:71973"/>
<dbReference type="UCSC" id="uc009qdt.1">
    <property type="organism name" value="mouse"/>
</dbReference>
<dbReference type="AGR" id="MGI:1919223"/>
<dbReference type="CTD" id="348093"/>
<dbReference type="MGI" id="MGI:1919223">
    <property type="gene designation" value="Rbpms2"/>
</dbReference>
<dbReference type="VEuPathDB" id="HostDB:ENSMUSG00000032387"/>
<dbReference type="eggNOG" id="KOG1457">
    <property type="taxonomic scope" value="Eukaryota"/>
</dbReference>
<dbReference type="GeneTree" id="ENSGT00940000158086"/>
<dbReference type="InParanoid" id="Q8VC52"/>
<dbReference type="OMA" id="AQQGWKY"/>
<dbReference type="OrthoDB" id="431169at2759"/>
<dbReference type="PhylomeDB" id="Q8VC52"/>
<dbReference type="TreeFam" id="TF351070"/>
<dbReference type="BioGRID-ORCS" id="71973">
    <property type="hits" value="3 hits in 78 CRISPR screens"/>
</dbReference>
<dbReference type="ChiTaRS" id="Rbpms2">
    <property type="organism name" value="mouse"/>
</dbReference>
<dbReference type="PRO" id="PR:Q8VC52"/>
<dbReference type="Proteomes" id="UP000000589">
    <property type="component" value="Chromosome 9"/>
</dbReference>
<dbReference type="RNAct" id="Q8VC52">
    <property type="molecule type" value="protein"/>
</dbReference>
<dbReference type="Bgee" id="ENSMUSG00000032387">
    <property type="expression patterns" value="Expressed in animal zygote and 219 other cell types or tissues"/>
</dbReference>
<dbReference type="ExpressionAtlas" id="Q8VC52">
    <property type="expression patterns" value="baseline and differential"/>
</dbReference>
<dbReference type="GO" id="GO:0005737">
    <property type="term" value="C:cytoplasm"/>
    <property type="evidence" value="ECO:0000250"/>
    <property type="project" value="UniProtKB"/>
</dbReference>
<dbReference type="GO" id="GO:0010494">
    <property type="term" value="C:cytoplasmic stress granule"/>
    <property type="evidence" value="ECO:0000250"/>
    <property type="project" value="UniProtKB"/>
</dbReference>
<dbReference type="GO" id="GO:0005829">
    <property type="term" value="C:cytosol"/>
    <property type="evidence" value="ECO:0000250"/>
    <property type="project" value="UniProtKB"/>
</dbReference>
<dbReference type="GO" id="GO:0005634">
    <property type="term" value="C:nucleus"/>
    <property type="evidence" value="ECO:0000250"/>
    <property type="project" value="UniProtKB"/>
</dbReference>
<dbReference type="GO" id="GO:0003729">
    <property type="term" value="F:mRNA binding"/>
    <property type="evidence" value="ECO:0007669"/>
    <property type="project" value="Ensembl"/>
</dbReference>
<dbReference type="GO" id="GO:0042803">
    <property type="term" value="F:protein homodimerization activity"/>
    <property type="evidence" value="ECO:0007669"/>
    <property type="project" value="Ensembl"/>
</dbReference>
<dbReference type="GO" id="GO:0048557">
    <property type="term" value="P:embryonic digestive tract morphogenesis"/>
    <property type="evidence" value="ECO:0000250"/>
    <property type="project" value="UniProtKB"/>
</dbReference>
<dbReference type="GO" id="GO:0030514">
    <property type="term" value="P:negative regulation of BMP signaling pathway"/>
    <property type="evidence" value="ECO:0000250"/>
    <property type="project" value="UniProtKB"/>
</dbReference>
<dbReference type="GO" id="GO:0051151">
    <property type="term" value="P:negative regulation of smooth muscle cell differentiation"/>
    <property type="evidence" value="ECO:0000250"/>
    <property type="project" value="UniProtKB"/>
</dbReference>
<dbReference type="GO" id="GO:0048661">
    <property type="term" value="P:positive regulation of smooth muscle cell proliferation"/>
    <property type="evidence" value="ECO:0000250"/>
    <property type="project" value="UniProtKB"/>
</dbReference>
<dbReference type="GO" id="GO:0000381">
    <property type="term" value="P:regulation of alternative mRNA splicing, via spliceosome"/>
    <property type="evidence" value="ECO:0000250"/>
    <property type="project" value="UniProtKB"/>
</dbReference>
<dbReference type="CDD" id="cd12683">
    <property type="entry name" value="RRM_RBPMS2"/>
    <property type="match status" value="1"/>
</dbReference>
<dbReference type="FunFam" id="3.30.70.330:FF:000037">
    <property type="entry name" value="RNA-binding protein with multiple splicing 2"/>
    <property type="match status" value="1"/>
</dbReference>
<dbReference type="Gene3D" id="3.30.70.330">
    <property type="match status" value="1"/>
</dbReference>
<dbReference type="InterPro" id="IPR012677">
    <property type="entry name" value="Nucleotide-bd_a/b_plait_sf"/>
</dbReference>
<dbReference type="InterPro" id="IPR035979">
    <property type="entry name" value="RBD_domain_sf"/>
</dbReference>
<dbReference type="InterPro" id="IPR034787">
    <property type="entry name" value="RBPMS2_RRM"/>
</dbReference>
<dbReference type="InterPro" id="IPR000504">
    <property type="entry name" value="RRM_dom"/>
</dbReference>
<dbReference type="PANTHER" id="PTHR10501">
    <property type="entry name" value="U1 SMALL NUCLEAR RIBONUCLEOPROTEIN A/U2 SMALL NUCLEAR RIBONUCLEOPROTEIN B"/>
    <property type="match status" value="1"/>
</dbReference>
<dbReference type="Pfam" id="PF00076">
    <property type="entry name" value="RRM_1"/>
    <property type="match status" value="1"/>
</dbReference>
<dbReference type="SMART" id="SM00360">
    <property type="entry name" value="RRM"/>
    <property type="match status" value="1"/>
</dbReference>
<dbReference type="SUPFAM" id="SSF54928">
    <property type="entry name" value="RNA-binding domain, RBD"/>
    <property type="match status" value="1"/>
</dbReference>
<dbReference type="PROSITE" id="PS50102">
    <property type="entry name" value="RRM"/>
    <property type="match status" value="1"/>
</dbReference>
<organism>
    <name type="scientific">Mus musculus</name>
    <name type="common">Mouse</name>
    <dbReference type="NCBI Taxonomy" id="10090"/>
    <lineage>
        <taxon>Eukaryota</taxon>
        <taxon>Metazoa</taxon>
        <taxon>Chordata</taxon>
        <taxon>Craniata</taxon>
        <taxon>Vertebrata</taxon>
        <taxon>Euteleostomi</taxon>
        <taxon>Mammalia</taxon>
        <taxon>Eutheria</taxon>
        <taxon>Euarchontoglires</taxon>
        <taxon>Glires</taxon>
        <taxon>Rodentia</taxon>
        <taxon>Myomorpha</taxon>
        <taxon>Muroidea</taxon>
        <taxon>Muridae</taxon>
        <taxon>Murinae</taxon>
        <taxon>Mus</taxon>
        <taxon>Mus</taxon>
    </lineage>
</organism>
<keyword id="KW-0007">Acetylation</keyword>
<keyword id="KW-0963">Cytoplasm</keyword>
<keyword id="KW-0217">Developmental protein</keyword>
<keyword id="KW-0539">Nucleus</keyword>
<keyword id="KW-1185">Reference proteome</keyword>
<keyword id="KW-0694">RNA-binding</keyword>
<reference key="1">
    <citation type="journal article" date="2005" name="Science">
        <title>The transcriptional landscape of the mammalian genome.</title>
        <authorList>
            <person name="Carninci P."/>
            <person name="Kasukawa T."/>
            <person name="Katayama S."/>
            <person name="Gough J."/>
            <person name="Frith M.C."/>
            <person name="Maeda N."/>
            <person name="Oyama R."/>
            <person name="Ravasi T."/>
            <person name="Lenhard B."/>
            <person name="Wells C."/>
            <person name="Kodzius R."/>
            <person name="Shimokawa K."/>
            <person name="Bajic V.B."/>
            <person name="Brenner S.E."/>
            <person name="Batalov S."/>
            <person name="Forrest A.R."/>
            <person name="Zavolan M."/>
            <person name="Davis M.J."/>
            <person name="Wilming L.G."/>
            <person name="Aidinis V."/>
            <person name="Allen J.E."/>
            <person name="Ambesi-Impiombato A."/>
            <person name="Apweiler R."/>
            <person name="Aturaliya R.N."/>
            <person name="Bailey T.L."/>
            <person name="Bansal M."/>
            <person name="Baxter L."/>
            <person name="Beisel K.W."/>
            <person name="Bersano T."/>
            <person name="Bono H."/>
            <person name="Chalk A.M."/>
            <person name="Chiu K.P."/>
            <person name="Choudhary V."/>
            <person name="Christoffels A."/>
            <person name="Clutterbuck D.R."/>
            <person name="Crowe M.L."/>
            <person name="Dalla E."/>
            <person name="Dalrymple B.P."/>
            <person name="de Bono B."/>
            <person name="Della Gatta G."/>
            <person name="di Bernardo D."/>
            <person name="Down T."/>
            <person name="Engstrom P."/>
            <person name="Fagiolini M."/>
            <person name="Faulkner G."/>
            <person name="Fletcher C.F."/>
            <person name="Fukushima T."/>
            <person name="Furuno M."/>
            <person name="Futaki S."/>
            <person name="Gariboldi M."/>
            <person name="Georgii-Hemming P."/>
            <person name="Gingeras T.R."/>
            <person name="Gojobori T."/>
            <person name="Green R.E."/>
            <person name="Gustincich S."/>
            <person name="Harbers M."/>
            <person name="Hayashi Y."/>
            <person name="Hensch T.K."/>
            <person name="Hirokawa N."/>
            <person name="Hill D."/>
            <person name="Huminiecki L."/>
            <person name="Iacono M."/>
            <person name="Ikeo K."/>
            <person name="Iwama A."/>
            <person name="Ishikawa T."/>
            <person name="Jakt M."/>
            <person name="Kanapin A."/>
            <person name="Katoh M."/>
            <person name="Kawasawa Y."/>
            <person name="Kelso J."/>
            <person name="Kitamura H."/>
            <person name="Kitano H."/>
            <person name="Kollias G."/>
            <person name="Krishnan S.P."/>
            <person name="Kruger A."/>
            <person name="Kummerfeld S.K."/>
            <person name="Kurochkin I.V."/>
            <person name="Lareau L.F."/>
            <person name="Lazarevic D."/>
            <person name="Lipovich L."/>
            <person name="Liu J."/>
            <person name="Liuni S."/>
            <person name="McWilliam S."/>
            <person name="Madan Babu M."/>
            <person name="Madera M."/>
            <person name="Marchionni L."/>
            <person name="Matsuda H."/>
            <person name="Matsuzawa S."/>
            <person name="Miki H."/>
            <person name="Mignone F."/>
            <person name="Miyake S."/>
            <person name="Morris K."/>
            <person name="Mottagui-Tabar S."/>
            <person name="Mulder N."/>
            <person name="Nakano N."/>
            <person name="Nakauchi H."/>
            <person name="Ng P."/>
            <person name="Nilsson R."/>
            <person name="Nishiguchi S."/>
            <person name="Nishikawa S."/>
            <person name="Nori F."/>
            <person name="Ohara O."/>
            <person name="Okazaki Y."/>
            <person name="Orlando V."/>
            <person name="Pang K.C."/>
            <person name="Pavan W.J."/>
            <person name="Pavesi G."/>
            <person name="Pesole G."/>
            <person name="Petrovsky N."/>
            <person name="Piazza S."/>
            <person name="Reed J."/>
            <person name="Reid J.F."/>
            <person name="Ring B.Z."/>
            <person name="Ringwald M."/>
            <person name="Rost B."/>
            <person name="Ruan Y."/>
            <person name="Salzberg S.L."/>
            <person name="Sandelin A."/>
            <person name="Schneider C."/>
            <person name="Schoenbach C."/>
            <person name="Sekiguchi K."/>
            <person name="Semple C.A."/>
            <person name="Seno S."/>
            <person name="Sessa L."/>
            <person name="Sheng Y."/>
            <person name="Shibata Y."/>
            <person name="Shimada H."/>
            <person name="Shimada K."/>
            <person name="Silva D."/>
            <person name="Sinclair B."/>
            <person name="Sperling S."/>
            <person name="Stupka E."/>
            <person name="Sugiura K."/>
            <person name="Sultana R."/>
            <person name="Takenaka Y."/>
            <person name="Taki K."/>
            <person name="Tammoja K."/>
            <person name="Tan S.L."/>
            <person name="Tang S."/>
            <person name="Taylor M.S."/>
            <person name="Tegner J."/>
            <person name="Teichmann S.A."/>
            <person name="Ueda H.R."/>
            <person name="van Nimwegen E."/>
            <person name="Verardo R."/>
            <person name="Wei C.L."/>
            <person name="Yagi K."/>
            <person name="Yamanishi H."/>
            <person name="Zabarovsky E."/>
            <person name="Zhu S."/>
            <person name="Zimmer A."/>
            <person name="Hide W."/>
            <person name="Bult C."/>
            <person name="Grimmond S.M."/>
            <person name="Teasdale R.D."/>
            <person name="Liu E.T."/>
            <person name="Brusic V."/>
            <person name="Quackenbush J."/>
            <person name="Wahlestedt C."/>
            <person name="Mattick J.S."/>
            <person name="Hume D.A."/>
            <person name="Kai C."/>
            <person name="Sasaki D."/>
            <person name="Tomaru Y."/>
            <person name="Fukuda S."/>
            <person name="Kanamori-Katayama M."/>
            <person name="Suzuki M."/>
            <person name="Aoki J."/>
            <person name="Arakawa T."/>
            <person name="Iida J."/>
            <person name="Imamura K."/>
            <person name="Itoh M."/>
            <person name="Kato T."/>
            <person name="Kawaji H."/>
            <person name="Kawagashira N."/>
            <person name="Kawashima T."/>
            <person name="Kojima M."/>
            <person name="Kondo S."/>
            <person name="Konno H."/>
            <person name="Nakano K."/>
            <person name="Ninomiya N."/>
            <person name="Nishio T."/>
            <person name="Okada M."/>
            <person name="Plessy C."/>
            <person name="Shibata K."/>
            <person name="Shiraki T."/>
            <person name="Suzuki S."/>
            <person name="Tagami M."/>
            <person name="Waki K."/>
            <person name="Watahiki A."/>
            <person name="Okamura-Oho Y."/>
            <person name="Suzuki H."/>
            <person name="Kawai J."/>
            <person name="Hayashizaki Y."/>
        </authorList>
    </citation>
    <scope>NUCLEOTIDE SEQUENCE [LARGE SCALE MRNA]</scope>
    <source>
        <strain>NOD</strain>
        <tissue>Lung</tissue>
        <tissue>Spleen</tissue>
    </source>
</reference>
<reference key="2">
    <citation type="journal article" date="2004" name="Genome Res.">
        <title>The status, quality, and expansion of the NIH full-length cDNA project: the Mammalian Gene Collection (MGC).</title>
        <authorList>
            <consortium name="The MGC Project Team"/>
        </authorList>
    </citation>
    <scope>NUCLEOTIDE SEQUENCE [LARGE SCALE MRNA]</scope>
    <source>
        <strain>FVB/N</strain>
        <tissue>Kidney</tissue>
    </source>
</reference>
<reference key="3">
    <citation type="journal article" date="2007" name="Proc. Natl. Acad. Sci. U.S.A.">
        <title>Large-scale phosphorylation analysis of mouse liver.</title>
        <authorList>
            <person name="Villen J."/>
            <person name="Beausoleil S.A."/>
            <person name="Gerber S.A."/>
            <person name="Gygi S.P."/>
        </authorList>
    </citation>
    <scope>ACETYLATION [LARGE SCALE ANALYSIS] AT SER-2</scope>
    <scope>CLEAVAGE OF INITIATOR METHIONINE [LARGE SCALE ANALYSIS]</scope>
    <scope>IDENTIFICATION BY MASS SPECTROMETRY [LARGE SCALE ANALYSIS]</scope>
    <source>
        <tissue>Liver</tissue>
    </source>
</reference>
<accession>Q8VC52</accession>